<evidence type="ECO:0000250" key="1"/>
<evidence type="ECO:0000255" key="2">
    <source>
        <dbReference type="HAMAP-Rule" id="MF_01046"/>
    </source>
</evidence>
<sequence length="283" mass="31236">MTVQTSKNPQVDIAEDNAFFPSEYSLSQYTSPVSDLDGVDYPKPYRGKHKILVIAADERYLPTDNGKLFSTGNHPIETLLPLYHLHAAGFEFEVATISGLMTKFEYWAMPHKDEKVMPFFEQHKSLFRNPKKLADVVASLNADSEYAAIFVPGGHGALIGLPESQDVAAALQWAIKNDRFVISLCHGPAAFLALRHSDNPLNGYSICAFPDAADKQTPDIGYMPGHLTWYFGEELKKMGMNIINDDITGRVHKDRKLLTGDSPFAANALGKLAAQEMLAAYAS</sequence>
<organism>
    <name type="scientific">Escherichia coli O6:H1 (strain CFT073 / ATCC 700928 / UPEC)</name>
    <dbReference type="NCBI Taxonomy" id="199310"/>
    <lineage>
        <taxon>Bacteria</taxon>
        <taxon>Pseudomonadati</taxon>
        <taxon>Pseudomonadota</taxon>
        <taxon>Gammaproteobacteria</taxon>
        <taxon>Enterobacterales</taxon>
        <taxon>Enterobacteriaceae</taxon>
        <taxon>Escherichia</taxon>
    </lineage>
</organism>
<gene>
    <name evidence="2" type="primary">hchA</name>
    <name type="ordered locus">c2385</name>
</gene>
<accession>P59331</accession>
<proteinExistence type="inferred from homology"/>
<comment type="function">
    <text evidence="2">Protein and nucleotide deglycase that catalyzes the deglycation of the Maillard adducts formed between amino groups of proteins or nucleotides and reactive carbonyl groups of glyoxals. Thus, functions as a protein deglycase that repairs methylglyoxal- and glyoxal-glycated proteins, and releases repaired proteins and lactate or glycolate, respectively. Deglycates cysteine, arginine and lysine residues in proteins, and thus reactivates these proteins by reversing glycation by glyoxals. Acts on early glycation intermediates (hemithioacetals and aminocarbinols), preventing the formation of Schiff bases and advanced glycation endproducts (AGE). Also functions as a nucleotide deglycase able to repair glycated guanine in the free nucleotide pool (GTP, GDP, GMP, dGTP) and in DNA and RNA. Is thus involved in a major nucleotide repair system named guanine glycation repair (GG repair), dedicated to reversing methylglyoxal and glyoxal damage via nucleotide sanitization and direct nucleic acid repair. Plays an important role in protecting cells from carbonyl stress.</text>
</comment>
<comment type="catalytic activity">
    <reaction evidence="2">
        <text>N(omega)-(1-hydroxy-2-oxopropyl)-L-arginyl-[protein] + H2O = lactate + L-arginyl-[protein] + H(+)</text>
        <dbReference type="Rhea" id="RHEA:49548"/>
        <dbReference type="Rhea" id="RHEA-COMP:10532"/>
        <dbReference type="Rhea" id="RHEA-COMP:12428"/>
        <dbReference type="ChEBI" id="CHEBI:15377"/>
        <dbReference type="ChEBI" id="CHEBI:15378"/>
        <dbReference type="ChEBI" id="CHEBI:24996"/>
        <dbReference type="ChEBI" id="CHEBI:29965"/>
        <dbReference type="ChEBI" id="CHEBI:131708"/>
        <dbReference type="EC" id="3.5.1.124"/>
    </reaction>
</comment>
<comment type="catalytic activity">
    <reaction evidence="2">
        <text>N(6)-(1-hydroxy-2-oxopropyl)-L-lysyl-[protein] + H2O = lactate + L-lysyl-[protein] + H(+)</text>
        <dbReference type="Rhea" id="RHEA:49552"/>
        <dbReference type="Rhea" id="RHEA-COMP:9752"/>
        <dbReference type="Rhea" id="RHEA-COMP:12429"/>
        <dbReference type="ChEBI" id="CHEBI:15377"/>
        <dbReference type="ChEBI" id="CHEBI:15378"/>
        <dbReference type="ChEBI" id="CHEBI:24996"/>
        <dbReference type="ChEBI" id="CHEBI:29969"/>
        <dbReference type="ChEBI" id="CHEBI:131709"/>
        <dbReference type="EC" id="3.5.1.124"/>
    </reaction>
</comment>
<comment type="catalytic activity">
    <reaction evidence="2">
        <text>S-(1-hydroxy-2-oxopropyl)-L-cysteinyl-[protein] + H2O = lactate + L-cysteinyl-[protein] + H(+)</text>
        <dbReference type="Rhea" id="RHEA:49556"/>
        <dbReference type="Rhea" id="RHEA-COMP:10131"/>
        <dbReference type="Rhea" id="RHEA-COMP:12430"/>
        <dbReference type="ChEBI" id="CHEBI:15377"/>
        <dbReference type="ChEBI" id="CHEBI:15378"/>
        <dbReference type="ChEBI" id="CHEBI:24996"/>
        <dbReference type="ChEBI" id="CHEBI:29950"/>
        <dbReference type="ChEBI" id="CHEBI:131710"/>
        <dbReference type="EC" id="3.5.1.124"/>
    </reaction>
</comment>
<comment type="catalytic activity">
    <reaction evidence="2">
        <text>N(omega)-(1-hydroxy-2-oxoethyl)-L-arginyl-[protein] + H2O = L-arginyl-[protein] + glycolate + H(+)</text>
        <dbReference type="Rhea" id="RHEA:57188"/>
        <dbReference type="Rhea" id="RHEA-COMP:10532"/>
        <dbReference type="Rhea" id="RHEA-COMP:14844"/>
        <dbReference type="ChEBI" id="CHEBI:15377"/>
        <dbReference type="ChEBI" id="CHEBI:15378"/>
        <dbReference type="ChEBI" id="CHEBI:29805"/>
        <dbReference type="ChEBI" id="CHEBI:29965"/>
        <dbReference type="ChEBI" id="CHEBI:141553"/>
        <dbReference type="EC" id="3.5.1.124"/>
    </reaction>
</comment>
<comment type="catalytic activity">
    <reaction evidence="2">
        <text>N(6)-(1-hydroxy-2-oxoethyl)-L-lysyl-[protein] + H2O = glycolate + L-lysyl-[protein] + H(+)</text>
        <dbReference type="Rhea" id="RHEA:57192"/>
        <dbReference type="Rhea" id="RHEA-COMP:9752"/>
        <dbReference type="Rhea" id="RHEA-COMP:14845"/>
        <dbReference type="ChEBI" id="CHEBI:15377"/>
        <dbReference type="ChEBI" id="CHEBI:15378"/>
        <dbReference type="ChEBI" id="CHEBI:29805"/>
        <dbReference type="ChEBI" id="CHEBI:29969"/>
        <dbReference type="ChEBI" id="CHEBI:141554"/>
        <dbReference type="EC" id="3.5.1.124"/>
    </reaction>
</comment>
<comment type="catalytic activity">
    <reaction evidence="2">
        <text>S-(1-hydroxy-2-oxoethyl)-L-cysteinyl-[protein] + H2O = glycolate + L-cysteinyl-[protein] + H(+)</text>
        <dbReference type="Rhea" id="RHEA:57196"/>
        <dbReference type="Rhea" id="RHEA-COMP:10131"/>
        <dbReference type="Rhea" id="RHEA-COMP:14846"/>
        <dbReference type="ChEBI" id="CHEBI:15377"/>
        <dbReference type="ChEBI" id="CHEBI:15378"/>
        <dbReference type="ChEBI" id="CHEBI:29805"/>
        <dbReference type="ChEBI" id="CHEBI:29950"/>
        <dbReference type="ChEBI" id="CHEBI:141555"/>
        <dbReference type="EC" id="3.5.1.124"/>
    </reaction>
</comment>
<comment type="catalytic activity">
    <reaction evidence="2">
        <text>N(2)-(1-hydroxy-2-oxopropyl)-dGTP + H2O = lactate + dGTP + H(+)</text>
        <dbReference type="Rhea" id="RHEA:57244"/>
        <dbReference type="ChEBI" id="CHEBI:15377"/>
        <dbReference type="ChEBI" id="CHEBI:15378"/>
        <dbReference type="ChEBI" id="CHEBI:24996"/>
        <dbReference type="ChEBI" id="CHEBI:61429"/>
        <dbReference type="ChEBI" id="CHEBI:141569"/>
    </reaction>
</comment>
<comment type="catalytic activity">
    <reaction evidence="2">
        <text>N(2)-(1-hydroxy-2-oxopropyl)-GTP + H2O = lactate + GTP + H(+)</text>
        <dbReference type="Rhea" id="RHEA:57256"/>
        <dbReference type="ChEBI" id="CHEBI:15377"/>
        <dbReference type="ChEBI" id="CHEBI:15378"/>
        <dbReference type="ChEBI" id="CHEBI:24996"/>
        <dbReference type="ChEBI" id="CHEBI:37565"/>
        <dbReference type="ChEBI" id="CHEBI:141570"/>
    </reaction>
</comment>
<comment type="catalytic activity">
    <reaction evidence="2">
        <text>N(2)-(1-hydroxy-2-oxopropyl)-GDP + H2O = lactate + GDP + H(+)</text>
        <dbReference type="Rhea" id="RHEA:57260"/>
        <dbReference type="ChEBI" id="CHEBI:15377"/>
        <dbReference type="ChEBI" id="CHEBI:15378"/>
        <dbReference type="ChEBI" id="CHEBI:24996"/>
        <dbReference type="ChEBI" id="CHEBI:58189"/>
        <dbReference type="ChEBI" id="CHEBI:141573"/>
    </reaction>
</comment>
<comment type="catalytic activity">
    <reaction evidence="2">
        <text>N(2)-(1-hydroxy-2-oxopropyl)-GMP + H2O = lactate + GMP + H(+)</text>
        <dbReference type="Rhea" id="RHEA:57268"/>
        <dbReference type="ChEBI" id="CHEBI:15377"/>
        <dbReference type="ChEBI" id="CHEBI:15378"/>
        <dbReference type="ChEBI" id="CHEBI:24996"/>
        <dbReference type="ChEBI" id="CHEBI:58115"/>
        <dbReference type="ChEBI" id="CHEBI:141575"/>
    </reaction>
</comment>
<comment type="catalytic activity">
    <reaction evidence="2">
        <text>N(2)-(1-hydroxy-2-oxoethyl)-dGTP + H2O = dGTP + glycolate + H(+)</text>
        <dbReference type="Rhea" id="RHEA:57248"/>
        <dbReference type="ChEBI" id="CHEBI:15377"/>
        <dbReference type="ChEBI" id="CHEBI:15378"/>
        <dbReference type="ChEBI" id="CHEBI:29805"/>
        <dbReference type="ChEBI" id="CHEBI:61429"/>
        <dbReference type="ChEBI" id="CHEBI:141572"/>
    </reaction>
</comment>
<comment type="catalytic activity">
    <reaction evidence="2">
        <text>N(2)-(1-hydroxy-2-oxoethyl)-GTP + H2O = glycolate + GTP + H(+)</text>
        <dbReference type="Rhea" id="RHEA:57252"/>
        <dbReference type="ChEBI" id="CHEBI:15377"/>
        <dbReference type="ChEBI" id="CHEBI:15378"/>
        <dbReference type="ChEBI" id="CHEBI:29805"/>
        <dbReference type="ChEBI" id="CHEBI:37565"/>
        <dbReference type="ChEBI" id="CHEBI:141571"/>
    </reaction>
</comment>
<comment type="catalytic activity">
    <reaction evidence="2">
        <text>N(2)-(1-hydroxy-2-oxoethyl)-GDP + H2O = glycolate + GDP + H(+)</text>
        <dbReference type="Rhea" id="RHEA:57264"/>
        <dbReference type="ChEBI" id="CHEBI:15377"/>
        <dbReference type="ChEBI" id="CHEBI:15378"/>
        <dbReference type="ChEBI" id="CHEBI:29805"/>
        <dbReference type="ChEBI" id="CHEBI:58189"/>
        <dbReference type="ChEBI" id="CHEBI:141574"/>
    </reaction>
</comment>
<comment type="catalytic activity">
    <reaction evidence="2">
        <text>N(2)-(1-hydroxy-2-oxoethyl)-GMP + H2O = glycolate + GMP + H(+)</text>
        <dbReference type="Rhea" id="RHEA:57304"/>
        <dbReference type="ChEBI" id="CHEBI:15377"/>
        <dbReference type="ChEBI" id="CHEBI:15378"/>
        <dbReference type="ChEBI" id="CHEBI:29805"/>
        <dbReference type="ChEBI" id="CHEBI:58115"/>
        <dbReference type="ChEBI" id="CHEBI:141576"/>
    </reaction>
</comment>
<comment type="catalytic activity">
    <reaction evidence="2">
        <text>an N(2)-(1-hydroxy-2-oxopropyl)-guanosine in RNA + H2O = a guanosine in RNA + lactate + H(+)</text>
        <dbReference type="Rhea" id="RHEA:57288"/>
        <dbReference type="Rhea" id="RHEA-COMP:14855"/>
        <dbReference type="Rhea" id="RHEA-COMP:14858"/>
        <dbReference type="ChEBI" id="CHEBI:15377"/>
        <dbReference type="ChEBI" id="CHEBI:15378"/>
        <dbReference type="ChEBI" id="CHEBI:24996"/>
        <dbReference type="ChEBI" id="CHEBI:74269"/>
        <dbReference type="ChEBI" id="CHEBI:141580"/>
    </reaction>
</comment>
<comment type="catalytic activity">
    <reaction evidence="2">
        <text>an N(2)-(1-hydroxy-2-oxopropyl)-2'-deoxyguanosine in DNA + H2O = a 2'-deoxyguanosine in DNA + lactate + H(+)</text>
        <dbReference type="Rhea" id="RHEA:57300"/>
        <dbReference type="Rhea" id="RHEA-COMP:11367"/>
        <dbReference type="Rhea" id="RHEA-COMP:14856"/>
        <dbReference type="ChEBI" id="CHEBI:15377"/>
        <dbReference type="ChEBI" id="CHEBI:15378"/>
        <dbReference type="ChEBI" id="CHEBI:24996"/>
        <dbReference type="ChEBI" id="CHEBI:85445"/>
        <dbReference type="ChEBI" id="CHEBI:141578"/>
    </reaction>
</comment>
<comment type="catalytic activity">
    <reaction evidence="2">
        <text>an N(2)-(1-hydroxy-2-oxoethyl)-guanosine in RNA + H2O = a guanosine in RNA + glycolate + H(+)</text>
        <dbReference type="Rhea" id="RHEA:57292"/>
        <dbReference type="Rhea" id="RHEA-COMP:14855"/>
        <dbReference type="Rhea" id="RHEA-COMP:14859"/>
        <dbReference type="ChEBI" id="CHEBI:15377"/>
        <dbReference type="ChEBI" id="CHEBI:15378"/>
        <dbReference type="ChEBI" id="CHEBI:29805"/>
        <dbReference type="ChEBI" id="CHEBI:74269"/>
        <dbReference type="ChEBI" id="CHEBI:141581"/>
    </reaction>
</comment>
<comment type="catalytic activity">
    <reaction evidence="2">
        <text>an N(2)-(1-hydroxy-2-oxoethyl)-2'-deoxyguanosine in DNA + H2O = a 2'-deoxyguanosine in DNA + glycolate + H(+)</text>
        <dbReference type="Rhea" id="RHEA:57296"/>
        <dbReference type="Rhea" id="RHEA-COMP:11367"/>
        <dbReference type="Rhea" id="RHEA-COMP:14857"/>
        <dbReference type="ChEBI" id="CHEBI:15377"/>
        <dbReference type="ChEBI" id="CHEBI:15378"/>
        <dbReference type="ChEBI" id="CHEBI:29805"/>
        <dbReference type="ChEBI" id="CHEBI:85445"/>
        <dbReference type="ChEBI" id="CHEBI:141579"/>
    </reaction>
</comment>
<comment type="subunit">
    <text evidence="2">Homodimer.</text>
</comment>
<comment type="subcellular location">
    <subcellularLocation>
        <location evidence="2">Cytoplasm</location>
    </subcellularLocation>
</comment>
<comment type="induction">
    <text evidence="2">By heat shock.</text>
</comment>
<comment type="similarity">
    <text evidence="2">Belongs to the peptidase C56 family. HchA subfamily.</text>
</comment>
<reference key="1">
    <citation type="journal article" date="2002" name="Proc. Natl. Acad. Sci. U.S.A.">
        <title>Extensive mosaic structure revealed by the complete genome sequence of uropathogenic Escherichia coli.</title>
        <authorList>
            <person name="Welch R.A."/>
            <person name="Burland V."/>
            <person name="Plunkett G. III"/>
            <person name="Redford P."/>
            <person name="Roesch P."/>
            <person name="Rasko D."/>
            <person name="Buckles E.L."/>
            <person name="Liou S.-R."/>
            <person name="Boutin A."/>
            <person name="Hackett J."/>
            <person name="Stroud D."/>
            <person name="Mayhew G.F."/>
            <person name="Rose D.J."/>
            <person name="Zhou S."/>
            <person name="Schwartz D.C."/>
            <person name="Perna N.T."/>
            <person name="Mobley H.L.T."/>
            <person name="Donnenberg M.S."/>
            <person name="Blattner F.R."/>
        </authorList>
    </citation>
    <scope>NUCLEOTIDE SEQUENCE [LARGE SCALE GENOMIC DNA]</scope>
    <source>
        <strain>CFT073 / ATCC 700928 / UPEC</strain>
    </source>
</reference>
<keyword id="KW-0963">Cytoplasm</keyword>
<keyword id="KW-0227">DNA damage</keyword>
<keyword id="KW-0234">DNA repair</keyword>
<keyword id="KW-0378">Hydrolase</keyword>
<keyword id="KW-0479">Metal-binding</keyword>
<keyword id="KW-1185">Reference proteome</keyword>
<keyword id="KW-0346">Stress response</keyword>
<keyword id="KW-0862">Zinc</keyword>
<feature type="initiator methionine" description="Removed" evidence="1">
    <location>
        <position position="1"/>
    </location>
</feature>
<feature type="chain" id="PRO_0000209414" description="Protein/nucleic acid deglycase HchA">
    <location>
        <begin position="2"/>
        <end position="283"/>
    </location>
</feature>
<feature type="active site" description="Nucleophile" evidence="2">
    <location>
        <position position="185"/>
    </location>
</feature>
<feature type="binding site" evidence="2">
    <location>
        <position position="86"/>
    </location>
    <ligand>
        <name>Zn(2+)</name>
        <dbReference type="ChEBI" id="CHEBI:29105"/>
    </ligand>
</feature>
<feature type="binding site" evidence="2">
    <location>
        <position position="91"/>
    </location>
    <ligand>
        <name>Zn(2+)</name>
        <dbReference type="ChEBI" id="CHEBI:29105"/>
    </ligand>
</feature>
<feature type="binding site" evidence="2">
    <location>
        <position position="123"/>
    </location>
    <ligand>
        <name>Zn(2+)</name>
        <dbReference type="ChEBI" id="CHEBI:29105"/>
    </ligand>
</feature>
<name>HCHA_ECOL6</name>
<dbReference type="EC" id="3.1.2.-" evidence="2"/>
<dbReference type="EC" id="3.5.1.-" evidence="2"/>
<dbReference type="EC" id="3.5.1.124" evidence="2"/>
<dbReference type="EMBL" id="AE014075">
    <property type="protein sequence ID" value="AAN80844.1"/>
    <property type="molecule type" value="Genomic_DNA"/>
</dbReference>
<dbReference type="RefSeq" id="WP_000218217.1">
    <property type="nucleotide sequence ID" value="NZ_CP051263.1"/>
</dbReference>
<dbReference type="SMR" id="P59331"/>
<dbReference type="STRING" id="199310.c2385"/>
<dbReference type="MEROPS" id="C56.006"/>
<dbReference type="KEGG" id="ecc:c2385"/>
<dbReference type="eggNOG" id="COG0693">
    <property type="taxonomic scope" value="Bacteria"/>
</dbReference>
<dbReference type="HOGENOM" id="CLU_066933_0_0_6"/>
<dbReference type="BioCyc" id="ECOL199310:C2385-MONOMER"/>
<dbReference type="Proteomes" id="UP000001410">
    <property type="component" value="Chromosome"/>
</dbReference>
<dbReference type="GO" id="GO:0005737">
    <property type="term" value="C:cytoplasm"/>
    <property type="evidence" value="ECO:0007669"/>
    <property type="project" value="UniProtKB-SubCell"/>
</dbReference>
<dbReference type="GO" id="GO:0019172">
    <property type="term" value="F:glyoxalase III activity"/>
    <property type="evidence" value="ECO:0007669"/>
    <property type="project" value="TreeGrafter"/>
</dbReference>
<dbReference type="GO" id="GO:0036524">
    <property type="term" value="F:protein deglycase activity"/>
    <property type="evidence" value="ECO:0007669"/>
    <property type="project" value="UniProtKB-UniRule"/>
</dbReference>
<dbReference type="GO" id="GO:0016790">
    <property type="term" value="F:thiolester hydrolase activity"/>
    <property type="evidence" value="ECO:0007669"/>
    <property type="project" value="UniProtKB-UniRule"/>
</dbReference>
<dbReference type="GO" id="GO:0008270">
    <property type="term" value="F:zinc ion binding"/>
    <property type="evidence" value="ECO:0007669"/>
    <property type="project" value="UniProtKB-UniRule"/>
</dbReference>
<dbReference type="GO" id="GO:0006281">
    <property type="term" value="P:DNA repair"/>
    <property type="evidence" value="ECO:0007669"/>
    <property type="project" value="UniProtKB-UniRule"/>
</dbReference>
<dbReference type="GO" id="GO:0019243">
    <property type="term" value="P:methylglyoxal catabolic process to D-lactate via S-lactoyl-glutathione"/>
    <property type="evidence" value="ECO:0007669"/>
    <property type="project" value="TreeGrafter"/>
</dbReference>
<dbReference type="GO" id="GO:0030091">
    <property type="term" value="P:protein repair"/>
    <property type="evidence" value="ECO:0007669"/>
    <property type="project" value="UniProtKB-UniRule"/>
</dbReference>
<dbReference type="FunFam" id="3.40.50.880:FF:000026">
    <property type="entry name" value="Protein/nucleic acid deglycase HchA"/>
    <property type="match status" value="1"/>
</dbReference>
<dbReference type="Gene3D" id="3.40.50.880">
    <property type="match status" value="1"/>
</dbReference>
<dbReference type="HAMAP" id="MF_01046">
    <property type="entry name" value="Deglycase_HchA"/>
    <property type="match status" value="1"/>
</dbReference>
<dbReference type="InterPro" id="IPR029062">
    <property type="entry name" value="Class_I_gatase-like"/>
</dbReference>
<dbReference type="InterPro" id="IPR017283">
    <property type="entry name" value="HchA"/>
</dbReference>
<dbReference type="InterPro" id="IPR050325">
    <property type="entry name" value="Prot/Nucl_acid_deglycase"/>
</dbReference>
<dbReference type="NCBIfam" id="NF003168">
    <property type="entry name" value="PRK04155.1"/>
    <property type="match status" value="1"/>
</dbReference>
<dbReference type="PANTHER" id="PTHR48094">
    <property type="entry name" value="PROTEIN/NUCLEIC ACID DEGLYCASE DJ-1-RELATED"/>
    <property type="match status" value="1"/>
</dbReference>
<dbReference type="PANTHER" id="PTHR48094:SF20">
    <property type="entry name" value="PROTEIN_NUCLEIC ACID DEGLYCASE 1"/>
    <property type="match status" value="1"/>
</dbReference>
<dbReference type="PIRSF" id="PIRSF037798">
    <property type="entry name" value="Chaperone_HchA"/>
    <property type="match status" value="1"/>
</dbReference>
<dbReference type="SUPFAM" id="SSF52317">
    <property type="entry name" value="Class I glutamine amidotransferase-like"/>
    <property type="match status" value="1"/>
</dbReference>
<protein>
    <recommendedName>
        <fullName evidence="2">Protein/nucleic acid deglycase HchA</fullName>
        <ecNumber evidence="2">3.1.2.-</ecNumber>
        <ecNumber evidence="2">3.5.1.-</ecNumber>
        <ecNumber evidence="2">3.5.1.124</ecNumber>
    </recommendedName>
    <alternativeName>
        <fullName evidence="2">Maillard deglycase</fullName>
    </alternativeName>
</protein>